<sequence>MEAFSGTPVVVAVAAVAATVLLLLLLRGAGRRPGRPVTLRDPQAKYPLPLVGKEEISHDTKKFRFGLPSPDHVLGLPVGQHVYLSAKINGNLVIRAYTPVSSDETKGYVDLIIKVYYKNVNPKFPEGGKMSQYLDSMKIGDVIDFRGPNGLLVYKGSGTFMIKPDKKSEAQRKFAKHLGVIAGGTGITPMLQLIRHITSDPKDSTKCYLLFANQTEKDILLRAELEDIAKRHPDQVRLWYTLDRPPQDWKYSSGFVTADMIKTHLPPPGGETLILMCGPPPMIQFACQPNLDKLGYPKSSTFSY</sequence>
<accession>Q5ZHX7</accession>
<organism>
    <name type="scientific">Gallus gallus</name>
    <name type="common">Chicken</name>
    <dbReference type="NCBI Taxonomy" id="9031"/>
    <lineage>
        <taxon>Eukaryota</taxon>
        <taxon>Metazoa</taxon>
        <taxon>Chordata</taxon>
        <taxon>Craniata</taxon>
        <taxon>Vertebrata</taxon>
        <taxon>Euteleostomi</taxon>
        <taxon>Archelosauria</taxon>
        <taxon>Archosauria</taxon>
        <taxon>Dinosauria</taxon>
        <taxon>Saurischia</taxon>
        <taxon>Theropoda</taxon>
        <taxon>Coelurosauria</taxon>
        <taxon>Aves</taxon>
        <taxon>Neognathae</taxon>
        <taxon>Galloanserae</taxon>
        <taxon>Galliformes</taxon>
        <taxon>Phasianidae</taxon>
        <taxon>Phasianinae</taxon>
        <taxon>Gallus</taxon>
    </lineage>
</organism>
<keyword id="KW-0274">FAD</keyword>
<keyword id="KW-0285">Flavoprotein</keyword>
<keyword id="KW-0444">Lipid biosynthesis</keyword>
<keyword id="KW-0443">Lipid metabolism</keyword>
<keyword id="KW-0472">Membrane</keyword>
<keyword id="KW-0520">NAD</keyword>
<keyword id="KW-0560">Oxidoreductase</keyword>
<keyword id="KW-1185">Reference proteome</keyword>
<keyword id="KW-0752">Steroid biosynthesis</keyword>
<keyword id="KW-0753">Steroid metabolism</keyword>
<keyword id="KW-0756">Sterol biosynthesis</keyword>
<keyword id="KW-1207">Sterol metabolism</keyword>
<keyword id="KW-0812">Transmembrane</keyword>
<keyword id="KW-1133">Transmembrane helix</keyword>
<gene>
    <name type="primary">CYB5R2</name>
    <name type="ORF">RCJMB04_32e2</name>
</gene>
<feature type="chain" id="PRO_0000287551" description="NADH-cytochrome b5 reductase 2">
    <location>
        <begin position="1"/>
        <end position="304"/>
    </location>
</feature>
<feature type="transmembrane region" description="Helical" evidence="2">
    <location>
        <begin position="6"/>
        <end position="26"/>
    </location>
</feature>
<feature type="domain" description="FAD-binding FR-type" evidence="3">
    <location>
        <begin position="43"/>
        <end position="155"/>
    </location>
</feature>
<feature type="binding site" evidence="1">
    <location>
        <begin position="135"/>
        <end position="165"/>
    </location>
    <ligand>
        <name>FAD</name>
        <dbReference type="ChEBI" id="CHEBI:57692"/>
    </ligand>
</feature>
<feature type="binding site" evidence="1">
    <location>
        <begin position="174"/>
        <end position="209"/>
    </location>
    <ligand>
        <name>FAD</name>
        <dbReference type="ChEBI" id="CHEBI:57692"/>
    </ligand>
</feature>
<reference key="1">
    <citation type="journal article" date="2005" name="Genome Biol.">
        <title>Full-length cDNAs from chicken bursal lymphocytes to facilitate gene function analysis.</title>
        <authorList>
            <person name="Caldwell R.B."/>
            <person name="Kierzek A.M."/>
            <person name="Arakawa H."/>
            <person name="Bezzubov Y."/>
            <person name="Zaim J."/>
            <person name="Fiedler P."/>
            <person name="Kutter S."/>
            <person name="Blagodatski A."/>
            <person name="Kostovska D."/>
            <person name="Koter M."/>
            <person name="Plachy J."/>
            <person name="Carninci P."/>
            <person name="Hayashizaki Y."/>
            <person name="Buerstedde J.-M."/>
        </authorList>
    </citation>
    <scope>NUCLEOTIDE SEQUENCE [LARGE SCALE MRNA]</scope>
    <source>
        <strain>CB</strain>
        <tissue>Bursa of Fabricius</tissue>
    </source>
</reference>
<comment type="function">
    <text evidence="1">NADH-cytochrome b5 reductases are involved in desaturation and elongation of fatty acids, cholesterol biosynthesis and drug metabolism.</text>
</comment>
<comment type="catalytic activity">
    <reaction>
        <text>2 Fe(III)-[cytochrome b5] + NADH = 2 Fe(II)-[cytochrome b5] + NAD(+) + H(+)</text>
        <dbReference type="Rhea" id="RHEA:46680"/>
        <dbReference type="Rhea" id="RHEA-COMP:10438"/>
        <dbReference type="Rhea" id="RHEA-COMP:10439"/>
        <dbReference type="ChEBI" id="CHEBI:15378"/>
        <dbReference type="ChEBI" id="CHEBI:29033"/>
        <dbReference type="ChEBI" id="CHEBI:29034"/>
        <dbReference type="ChEBI" id="CHEBI:57540"/>
        <dbReference type="ChEBI" id="CHEBI:57945"/>
        <dbReference type="EC" id="1.6.2.2"/>
    </reaction>
</comment>
<comment type="cofactor">
    <cofactor evidence="1">
        <name>FAD</name>
        <dbReference type="ChEBI" id="CHEBI:57692"/>
    </cofactor>
</comment>
<comment type="subcellular location">
    <subcellularLocation>
        <location evidence="4">Membrane</location>
        <topology evidence="4">Single-pass membrane protein</topology>
    </subcellularLocation>
</comment>
<comment type="similarity">
    <text evidence="4">Belongs to the flavoprotein pyridine nucleotide cytochrome reductase family.</text>
</comment>
<proteinExistence type="evidence at transcript level"/>
<dbReference type="EC" id="1.6.2.2"/>
<dbReference type="EMBL" id="AJ721007">
    <property type="protein sequence ID" value="CAG32666.1"/>
    <property type="molecule type" value="mRNA"/>
</dbReference>
<dbReference type="RefSeq" id="NP_001258911.1">
    <property type="nucleotide sequence ID" value="NM_001271982.1"/>
</dbReference>
<dbReference type="SMR" id="Q5ZHX7"/>
<dbReference type="FunCoup" id="Q5ZHX7">
    <property type="interactions" value="276"/>
</dbReference>
<dbReference type="STRING" id="9031.ENSGALP00000043739"/>
<dbReference type="PaxDb" id="9031-ENSGALP00000008475"/>
<dbReference type="GeneID" id="408182"/>
<dbReference type="KEGG" id="gga:408182"/>
<dbReference type="CTD" id="51700"/>
<dbReference type="VEuPathDB" id="HostDB:geneid_408182"/>
<dbReference type="eggNOG" id="KOG0534">
    <property type="taxonomic scope" value="Eukaryota"/>
</dbReference>
<dbReference type="InParanoid" id="Q5ZHX7"/>
<dbReference type="OrthoDB" id="432685at2759"/>
<dbReference type="PhylomeDB" id="Q5ZHX7"/>
<dbReference type="PRO" id="PR:Q5ZHX7"/>
<dbReference type="Proteomes" id="UP000000539">
    <property type="component" value="Unassembled WGS sequence"/>
</dbReference>
<dbReference type="GO" id="GO:0016020">
    <property type="term" value="C:membrane"/>
    <property type="evidence" value="ECO:0007669"/>
    <property type="project" value="UniProtKB-SubCell"/>
</dbReference>
<dbReference type="GO" id="GO:0005739">
    <property type="term" value="C:mitochondrion"/>
    <property type="evidence" value="ECO:0000318"/>
    <property type="project" value="GO_Central"/>
</dbReference>
<dbReference type="GO" id="GO:0004128">
    <property type="term" value="F:cytochrome-b5 reductase activity, acting on NAD(P)H"/>
    <property type="evidence" value="ECO:0007669"/>
    <property type="project" value="UniProtKB-EC"/>
</dbReference>
<dbReference type="GO" id="GO:0071949">
    <property type="term" value="F:FAD binding"/>
    <property type="evidence" value="ECO:0000318"/>
    <property type="project" value="GO_Central"/>
</dbReference>
<dbReference type="GO" id="GO:0016126">
    <property type="term" value="P:sterol biosynthetic process"/>
    <property type="evidence" value="ECO:0007669"/>
    <property type="project" value="UniProtKB-KW"/>
</dbReference>
<dbReference type="CDD" id="cd06183">
    <property type="entry name" value="cyt_b5_reduct_like"/>
    <property type="match status" value="1"/>
</dbReference>
<dbReference type="FunFam" id="2.40.30.10:FF:000021">
    <property type="entry name" value="NADH-cytochrome b5 reductase"/>
    <property type="match status" value="1"/>
</dbReference>
<dbReference type="FunFam" id="3.40.50.80:FF:000005">
    <property type="entry name" value="NADH-cytochrome b5 reductase"/>
    <property type="match status" value="1"/>
</dbReference>
<dbReference type="Gene3D" id="3.40.50.80">
    <property type="entry name" value="Nucleotide-binding domain of ferredoxin-NADP reductase (FNR) module"/>
    <property type="match status" value="1"/>
</dbReference>
<dbReference type="Gene3D" id="2.40.30.10">
    <property type="entry name" value="Translation factors"/>
    <property type="match status" value="1"/>
</dbReference>
<dbReference type="InterPro" id="IPR001834">
    <property type="entry name" value="CBR-like"/>
</dbReference>
<dbReference type="InterPro" id="IPR008333">
    <property type="entry name" value="Cbr1-like_FAD-bd_dom"/>
</dbReference>
<dbReference type="InterPro" id="IPR017927">
    <property type="entry name" value="FAD-bd_FR_type"/>
</dbReference>
<dbReference type="InterPro" id="IPR001709">
    <property type="entry name" value="Flavoprot_Pyr_Nucl_cyt_Rdtase"/>
</dbReference>
<dbReference type="InterPro" id="IPR039261">
    <property type="entry name" value="FNR_nucleotide-bd"/>
</dbReference>
<dbReference type="InterPro" id="IPR001433">
    <property type="entry name" value="OxRdtase_FAD/NAD-bd"/>
</dbReference>
<dbReference type="InterPro" id="IPR017938">
    <property type="entry name" value="Riboflavin_synthase-like_b-brl"/>
</dbReference>
<dbReference type="PANTHER" id="PTHR19370">
    <property type="entry name" value="NADH-CYTOCHROME B5 REDUCTASE"/>
    <property type="match status" value="1"/>
</dbReference>
<dbReference type="PANTHER" id="PTHR19370:SF108">
    <property type="entry name" value="NADH-CYTOCHROME B5 REDUCTASE 2"/>
    <property type="match status" value="1"/>
</dbReference>
<dbReference type="Pfam" id="PF00970">
    <property type="entry name" value="FAD_binding_6"/>
    <property type="match status" value="1"/>
</dbReference>
<dbReference type="Pfam" id="PF00175">
    <property type="entry name" value="NAD_binding_1"/>
    <property type="match status" value="1"/>
</dbReference>
<dbReference type="PRINTS" id="PR00406">
    <property type="entry name" value="CYTB5RDTASE"/>
</dbReference>
<dbReference type="PRINTS" id="PR00371">
    <property type="entry name" value="FPNCR"/>
</dbReference>
<dbReference type="SUPFAM" id="SSF52343">
    <property type="entry name" value="Ferredoxin reductase-like, C-terminal NADP-linked domain"/>
    <property type="match status" value="1"/>
</dbReference>
<dbReference type="SUPFAM" id="SSF63380">
    <property type="entry name" value="Riboflavin synthase domain-like"/>
    <property type="match status" value="1"/>
</dbReference>
<dbReference type="PROSITE" id="PS51384">
    <property type="entry name" value="FAD_FR"/>
    <property type="match status" value="1"/>
</dbReference>
<evidence type="ECO:0000250" key="1"/>
<evidence type="ECO:0000255" key="2"/>
<evidence type="ECO:0000255" key="3">
    <source>
        <dbReference type="PROSITE-ProRule" id="PRU00716"/>
    </source>
</evidence>
<evidence type="ECO:0000305" key="4"/>
<name>NB5R2_CHICK</name>
<protein>
    <recommendedName>
        <fullName>NADH-cytochrome b5 reductase 2</fullName>
        <shortName>b5R.2</shortName>
        <ecNumber>1.6.2.2</ecNumber>
    </recommendedName>
</protein>